<proteinExistence type="inferred from homology"/>
<evidence type="ECO:0000255" key="1">
    <source>
        <dbReference type="HAMAP-Rule" id="MF_01345"/>
    </source>
</evidence>
<evidence type="ECO:0000305" key="2"/>
<organism>
    <name type="scientific">Bacillus velezensis (strain DSM 23117 / BGSC 10A6 / LMG 26770 / FZB42)</name>
    <name type="common">Bacillus amyloliquefaciens subsp. plantarum</name>
    <dbReference type="NCBI Taxonomy" id="326423"/>
    <lineage>
        <taxon>Bacteria</taxon>
        <taxon>Bacillati</taxon>
        <taxon>Bacillota</taxon>
        <taxon>Bacilli</taxon>
        <taxon>Bacillales</taxon>
        <taxon>Bacillaceae</taxon>
        <taxon>Bacillus</taxon>
        <taxon>Bacillus amyloliquefaciens group</taxon>
    </lineage>
</organism>
<comment type="function">
    <text evidence="1">One of the primary rRNA binding proteins, it binds specifically to the 5'-end of 16S ribosomal RNA.</text>
</comment>
<comment type="subunit">
    <text evidence="1">Part of the 30S ribosomal subunit.</text>
</comment>
<comment type="similarity">
    <text evidence="1">Belongs to the universal ribosomal protein uS17 family.</text>
</comment>
<feature type="chain" id="PRO_1000054915" description="Small ribosomal subunit protein uS17">
    <location>
        <begin position="1"/>
        <end position="87"/>
    </location>
</feature>
<dbReference type="EMBL" id="CP000560">
    <property type="protein sequence ID" value="ABS72573.1"/>
    <property type="molecule type" value="Genomic_DNA"/>
</dbReference>
<dbReference type="RefSeq" id="WP_003156484.1">
    <property type="nucleotide sequence ID" value="NC_009725.2"/>
</dbReference>
<dbReference type="SMR" id="A7Z0P7"/>
<dbReference type="GeneID" id="93079289"/>
<dbReference type="KEGG" id="bay:RBAM_001500"/>
<dbReference type="HOGENOM" id="CLU_073626_1_0_9"/>
<dbReference type="Proteomes" id="UP000001120">
    <property type="component" value="Chromosome"/>
</dbReference>
<dbReference type="GO" id="GO:0022627">
    <property type="term" value="C:cytosolic small ribosomal subunit"/>
    <property type="evidence" value="ECO:0007669"/>
    <property type="project" value="TreeGrafter"/>
</dbReference>
<dbReference type="GO" id="GO:0019843">
    <property type="term" value="F:rRNA binding"/>
    <property type="evidence" value="ECO:0007669"/>
    <property type="project" value="UniProtKB-UniRule"/>
</dbReference>
<dbReference type="GO" id="GO:0003735">
    <property type="term" value="F:structural constituent of ribosome"/>
    <property type="evidence" value="ECO:0007669"/>
    <property type="project" value="InterPro"/>
</dbReference>
<dbReference type="GO" id="GO:0006412">
    <property type="term" value="P:translation"/>
    <property type="evidence" value="ECO:0007669"/>
    <property type="project" value="UniProtKB-UniRule"/>
</dbReference>
<dbReference type="CDD" id="cd00364">
    <property type="entry name" value="Ribosomal_uS17"/>
    <property type="match status" value="1"/>
</dbReference>
<dbReference type="FunFam" id="2.40.50.140:FF:000026">
    <property type="entry name" value="30S ribosomal protein S17"/>
    <property type="match status" value="1"/>
</dbReference>
<dbReference type="Gene3D" id="2.40.50.140">
    <property type="entry name" value="Nucleic acid-binding proteins"/>
    <property type="match status" value="1"/>
</dbReference>
<dbReference type="HAMAP" id="MF_01345_B">
    <property type="entry name" value="Ribosomal_uS17_B"/>
    <property type="match status" value="1"/>
</dbReference>
<dbReference type="InterPro" id="IPR012340">
    <property type="entry name" value="NA-bd_OB-fold"/>
</dbReference>
<dbReference type="InterPro" id="IPR000266">
    <property type="entry name" value="Ribosomal_uS17"/>
</dbReference>
<dbReference type="InterPro" id="IPR019984">
    <property type="entry name" value="Ribosomal_uS17_bact/chlr"/>
</dbReference>
<dbReference type="InterPro" id="IPR019979">
    <property type="entry name" value="Ribosomal_uS17_CS"/>
</dbReference>
<dbReference type="NCBIfam" id="NF004123">
    <property type="entry name" value="PRK05610.1"/>
    <property type="match status" value="1"/>
</dbReference>
<dbReference type="NCBIfam" id="TIGR03635">
    <property type="entry name" value="uS17_bact"/>
    <property type="match status" value="1"/>
</dbReference>
<dbReference type="PANTHER" id="PTHR10744">
    <property type="entry name" value="40S RIBOSOMAL PROTEIN S11 FAMILY MEMBER"/>
    <property type="match status" value="1"/>
</dbReference>
<dbReference type="PANTHER" id="PTHR10744:SF1">
    <property type="entry name" value="SMALL RIBOSOMAL SUBUNIT PROTEIN US17M"/>
    <property type="match status" value="1"/>
</dbReference>
<dbReference type="Pfam" id="PF00366">
    <property type="entry name" value="Ribosomal_S17"/>
    <property type="match status" value="1"/>
</dbReference>
<dbReference type="PRINTS" id="PR00973">
    <property type="entry name" value="RIBOSOMALS17"/>
</dbReference>
<dbReference type="SUPFAM" id="SSF50249">
    <property type="entry name" value="Nucleic acid-binding proteins"/>
    <property type="match status" value="1"/>
</dbReference>
<dbReference type="PROSITE" id="PS00056">
    <property type="entry name" value="RIBOSOMAL_S17"/>
    <property type="match status" value="1"/>
</dbReference>
<sequence>MSERNQRKVYQGRVVSDKMDKTITVVVETYKKDPIYGKRVKYSKKFKAHDENNQAKIGDIVKIMETRPLSATKRFRLVEVVEEAVII</sequence>
<accession>A7Z0P7</accession>
<protein>
    <recommendedName>
        <fullName evidence="1">Small ribosomal subunit protein uS17</fullName>
    </recommendedName>
    <alternativeName>
        <fullName evidence="2">30S ribosomal protein S17</fullName>
    </alternativeName>
</protein>
<gene>
    <name evidence="1" type="primary">rpsQ</name>
    <name type="ordered locus">RBAM_001500</name>
</gene>
<reference key="1">
    <citation type="journal article" date="2007" name="Nat. Biotechnol.">
        <title>Comparative analysis of the complete genome sequence of the plant growth-promoting bacterium Bacillus amyloliquefaciens FZB42.</title>
        <authorList>
            <person name="Chen X.H."/>
            <person name="Koumoutsi A."/>
            <person name="Scholz R."/>
            <person name="Eisenreich A."/>
            <person name="Schneider K."/>
            <person name="Heinemeyer I."/>
            <person name="Morgenstern B."/>
            <person name="Voss B."/>
            <person name="Hess W.R."/>
            <person name="Reva O."/>
            <person name="Junge H."/>
            <person name="Voigt B."/>
            <person name="Jungblut P.R."/>
            <person name="Vater J."/>
            <person name="Suessmuth R."/>
            <person name="Liesegang H."/>
            <person name="Strittmatter A."/>
            <person name="Gottschalk G."/>
            <person name="Borriss R."/>
        </authorList>
    </citation>
    <scope>NUCLEOTIDE SEQUENCE [LARGE SCALE GENOMIC DNA]</scope>
    <source>
        <strain>DSM 23117 / BGSC 10A6 / LMG 26770 / FZB42</strain>
    </source>
</reference>
<name>RS17_BACVZ</name>
<keyword id="KW-0687">Ribonucleoprotein</keyword>
<keyword id="KW-0689">Ribosomal protein</keyword>
<keyword id="KW-0694">RNA-binding</keyword>
<keyword id="KW-0699">rRNA-binding</keyword>